<name>NQRF_YERE8</name>
<comment type="function">
    <text evidence="1">NQR complex catalyzes the reduction of ubiquinone-1 to ubiquinol by two successive reactions, coupled with the transport of Na(+) ions from the cytoplasm to the periplasm. The first step is catalyzed by NqrF, which accepts electrons from NADH and reduces ubiquinone-1 to ubisemiquinone by a one-electron transfer pathway.</text>
</comment>
<comment type="catalytic activity">
    <reaction evidence="1">
        <text>a ubiquinone + n Na(+)(in) + NADH + H(+) = a ubiquinol + n Na(+)(out) + NAD(+)</text>
        <dbReference type="Rhea" id="RHEA:47748"/>
        <dbReference type="Rhea" id="RHEA-COMP:9565"/>
        <dbReference type="Rhea" id="RHEA-COMP:9566"/>
        <dbReference type="ChEBI" id="CHEBI:15378"/>
        <dbReference type="ChEBI" id="CHEBI:16389"/>
        <dbReference type="ChEBI" id="CHEBI:17976"/>
        <dbReference type="ChEBI" id="CHEBI:29101"/>
        <dbReference type="ChEBI" id="CHEBI:57540"/>
        <dbReference type="ChEBI" id="CHEBI:57945"/>
        <dbReference type="EC" id="7.2.1.1"/>
    </reaction>
</comment>
<comment type="cofactor">
    <cofactor evidence="1">
        <name>[2Fe-2S] cluster</name>
        <dbReference type="ChEBI" id="CHEBI:190135"/>
    </cofactor>
    <text evidence="1">Binds 1 [2Fe-2S] cluster.</text>
</comment>
<comment type="cofactor">
    <cofactor evidence="1">
        <name>FAD</name>
        <dbReference type="ChEBI" id="CHEBI:57692"/>
    </cofactor>
</comment>
<comment type="subunit">
    <text evidence="1">Composed of six subunits; NqrA, NqrB, NqrC, NqrD, NqrE and NqrF.</text>
</comment>
<comment type="subcellular location">
    <subcellularLocation>
        <location evidence="1">Cell inner membrane</location>
        <topology evidence="1">Single-pass membrane protein</topology>
    </subcellularLocation>
</comment>
<comment type="similarity">
    <text evidence="1">Belongs to the NqrF family.</text>
</comment>
<dbReference type="EC" id="7.2.1.1" evidence="1"/>
<dbReference type="EMBL" id="AM286415">
    <property type="protein sequence ID" value="CAL13247.1"/>
    <property type="molecule type" value="Genomic_DNA"/>
</dbReference>
<dbReference type="RefSeq" id="WP_011816933.1">
    <property type="nucleotide sequence ID" value="NC_008800.1"/>
</dbReference>
<dbReference type="RefSeq" id="YP_001007391.1">
    <property type="nucleotide sequence ID" value="NC_008800.1"/>
</dbReference>
<dbReference type="SMR" id="A1JNZ2"/>
<dbReference type="KEGG" id="yen:YE3215"/>
<dbReference type="PATRIC" id="fig|393305.7.peg.3419"/>
<dbReference type="eggNOG" id="COG2871">
    <property type="taxonomic scope" value="Bacteria"/>
</dbReference>
<dbReference type="HOGENOM" id="CLU_003827_7_2_6"/>
<dbReference type="OrthoDB" id="9806195at2"/>
<dbReference type="Proteomes" id="UP000000642">
    <property type="component" value="Chromosome"/>
</dbReference>
<dbReference type="GO" id="GO:0005886">
    <property type="term" value="C:plasma membrane"/>
    <property type="evidence" value="ECO:0007669"/>
    <property type="project" value="UniProtKB-SubCell"/>
</dbReference>
<dbReference type="GO" id="GO:0051537">
    <property type="term" value="F:2 iron, 2 sulfur cluster binding"/>
    <property type="evidence" value="ECO:0007669"/>
    <property type="project" value="UniProtKB-KW"/>
</dbReference>
<dbReference type="GO" id="GO:0009055">
    <property type="term" value="F:electron transfer activity"/>
    <property type="evidence" value="ECO:0007669"/>
    <property type="project" value="UniProtKB-UniRule"/>
</dbReference>
<dbReference type="GO" id="GO:0046872">
    <property type="term" value="F:metal ion binding"/>
    <property type="evidence" value="ECO:0007669"/>
    <property type="project" value="UniProtKB-KW"/>
</dbReference>
<dbReference type="GO" id="GO:0016655">
    <property type="term" value="F:oxidoreductase activity, acting on NAD(P)H, quinone or similar compound as acceptor"/>
    <property type="evidence" value="ECO:0007669"/>
    <property type="project" value="InterPro"/>
</dbReference>
<dbReference type="GO" id="GO:0006814">
    <property type="term" value="P:sodium ion transport"/>
    <property type="evidence" value="ECO:0007669"/>
    <property type="project" value="UniProtKB-UniRule"/>
</dbReference>
<dbReference type="CDD" id="cd06188">
    <property type="entry name" value="NADH_quinone_reductase"/>
    <property type="match status" value="1"/>
</dbReference>
<dbReference type="FunFam" id="2.40.30.10:FF:000064">
    <property type="entry name" value="Na(+)-translocating NADH-quinone reductase subunit F"/>
    <property type="match status" value="1"/>
</dbReference>
<dbReference type="FunFam" id="3.40.50.80:FF:000014">
    <property type="entry name" value="Na(+)-translocating NADH-quinone reductase subunit F"/>
    <property type="match status" value="1"/>
</dbReference>
<dbReference type="Gene3D" id="3.10.20.30">
    <property type="match status" value="1"/>
</dbReference>
<dbReference type="Gene3D" id="3.40.50.80">
    <property type="entry name" value="Nucleotide-binding domain of ferredoxin-NADP reductase (FNR) module"/>
    <property type="match status" value="1"/>
</dbReference>
<dbReference type="Gene3D" id="2.40.30.10">
    <property type="entry name" value="Translation factors"/>
    <property type="match status" value="1"/>
</dbReference>
<dbReference type="HAMAP" id="MF_00430">
    <property type="entry name" value="NqrF"/>
    <property type="match status" value="1"/>
</dbReference>
<dbReference type="InterPro" id="IPR036010">
    <property type="entry name" value="2Fe-2S_ferredoxin-like_sf"/>
</dbReference>
<dbReference type="InterPro" id="IPR001041">
    <property type="entry name" value="2Fe-2S_ferredoxin-type"/>
</dbReference>
<dbReference type="InterPro" id="IPR012675">
    <property type="entry name" value="Beta-grasp_dom_sf"/>
</dbReference>
<dbReference type="InterPro" id="IPR008333">
    <property type="entry name" value="Cbr1-like_FAD-bd_dom"/>
</dbReference>
<dbReference type="InterPro" id="IPR017927">
    <property type="entry name" value="FAD-bd_FR_type"/>
</dbReference>
<dbReference type="InterPro" id="IPR001709">
    <property type="entry name" value="Flavoprot_Pyr_Nucl_cyt_Rdtase"/>
</dbReference>
<dbReference type="InterPro" id="IPR039261">
    <property type="entry name" value="FNR_nucleotide-bd"/>
</dbReference>
<dbReference type="InterPro" id="IPR010205">
    <property type="entry name" value="NqrF"/>
</dbReference>
<dbReference type="InterPro" id="IPR001433">
    <property type="entry name" value="OxRdtase_FAD/NAD-bd"/>
</dbReference>
<dbReference type="InterPro" id="IPR017938">
    <property type="entry name" value="Riboflavin_synthase-like_b-brl"/>
</dbReference>
<dbReference type="NCBIfam" id="TIGR01941">
    <property type="entry name" value="nqrF"/>
    <property type="match status" value="1"/>
</dbReference>
<dbReference type="PANTHER" id="PTHR43644">
    <property type="entry name" value="NA(+)-TRANSLOCATING NADH-QUINONE REDUCTASE SUBUNIT"/>
    <property type="match status" value="1"/>
</dbReference>
<dbReference type="PANTHER" id="PTHR43644:SF1">
    <property type="entry name" value="NAD(P)H-FLAVIN REDUCTASE"/>
    <property type="match status" value="1"/>
</dbReference>
<dbReference type="Pfam" id="PF00970">
    <property type="entry name" value="FAD_binding_6"/>
    <property type="match status" value="1"/>
</dbReference>
<dbReference type="Pfam" id="PF00111">
    <property type="entry name" value="Fer2"/>
    <property type="match status" value="1"/>
</dbReference>
<dbReference type="Pfam" id="PF00175">
    <property type="entry name" value="NAD_binding_1"/>
    <property type="match status" value="1"/>
</dbReference>
<dbReference type="PIRSF" id="PIRSF000044">
    <property type="entry name" value="Cis_Diol_DH_RD"/>
    <property type="match status" value="1"/>
</dbReference>
<dbReference type="PRINTS" id="PR00371">
    <property type="entry name" value="FPNCR"/>
</dbReference>
<dbReference type="SUPFAM" id="SSF54292">
    <property type="entry name" value="2Fe-2S ferredoxin-like"/>
    <property type="match status" value="1"/>
</dbReference>
<dbReference type="SUPFAM" id="SSF52343">
    <property type="entry name" value="Ferredoxin reductase-like, C-terminal NADP-linked domain"/>
    <property type="match status" value="1"/>
</dbReference>
<dbReference type="SUPFAM" id="SSF63380">
    <property type="entry name" value="Riboflavin synthase domain-like"/>
    <property type="match status" value="1"/>
</dbReference>
<dbReference type="PROSITE" id="PS51085">
    <property type="entry name" value="2FE2S_FER_2"/>
    <property type="match status" value="1"/>
</dbReference>
<dbReference type="PROSITE" id="PS51384">
    <property type="entry name" value="FAD_FR"/>
    <property type="match status" value="1"/>
</dbReference>
<feature type="chain" id="PRO_1000080596" description="Na(+)-translocating NADH-quinone reductase subunit F">
    <location>
        <begin position="1"/>
        <end position="407"/>
    </location>
</feature>
<feature type="transmembrane region" description="Helical" evidence="1">
    <location>
        <begin position="3"/>
        <end position="23"/>
    </location>
</feature>
<feature type="domain" description="2Fe-2S ferredoxin-type" evidence="1">
    <location>
        <begin position="32"/>
        <end position="126"/>
    </location>
</feature>
<feature type="domain" description="FAD-binding FR-type" evidence="1">
    <location>
        <begin position="129"/>
        <end position="269"/>
    </location>
</feature>
<feature type="binding site" evidence="1">
    <location>
        <position position="69"/>
    </location>
    <ligand>
        <name>[2Fe-2S] cluster</name>
        <dbReference type="ChEBI" id="CHEBI:190135"/>
    </ligand>
</feature>
<feature type="binding site" evidence="1">
    <location>
        <position position="75"/>
    </location>
    <ligand>
        <name>[2Fe-2S] cluster</name>
        <dbReference type="ChEBI" id="CHEBI:190135"/>
    </ligand>
</feature>
<feature type="binding site" evidence="1">
    <location>
        <position position="78"/>
    </location>
    <ligand>
        <name>[2Fe-2S] cluster</name>
        <dbReference type="ChEBI" id="CHEBI:190135"/>
    </ligand>
</feature>
<feature type="binding site" evidence="1">
    <location>
        <position position="110"/>
    </location>
    <ligand>
        <name>[2Fe-2S] cluster</name>
        <dbReference type="ChEBI" id="CHEBI:190135"/>
    </ligand>
</feature>
<gene>
    <name evidence="1" type="primary">nqrF</name>
    <name type="ordered locus">YE3215</name>
</gene>
<protein>
    <recommendedName>
        <fullName evidence="1">Na(+)-translocating NADH-quinone reductase subunit F</fullName>
        <shortName evidence="1">Na(+)-NQR subunit F</shortName>
        <shortName evidence="1">Na(+)-translocating NQR subunit F</shortName>
        <ecNumber evidence="1">7.2.1.1</ecNumber>
    </recommendedName>
    <alternativeName>
        <fullName evidence="1">NQR complex subunit F</fullName>
    </alternativeName>
    <alternativeName>
        <fullName evidence="1">NQR-1 subunit F</fullName>
    </alternativeName>
</protein>
<reference key="1">
    <citation type="journal article" date="2006" name="PLoS Genet.">
        <title>The complete genome sequence and comparative genome analysis of the high pathogenicity Yersinia enterocolitica strain 8081.</title>
        <authorList>
            <person name="Thomson N.R."/>
            <person name="Howard S."/>
            <person name="Wren B.W."/>
            <person name="Holden M.T.G."/>
            <person name="Crossman L."/>
            <person name="Challis G.L."/>
            <person name="Churcher C."/>
            <person name="Mungall K."/>
            <person name="Brooks K."/>
            <person name="Chillingworth T."/>
            <person name="Feltwell T."/>
            <person name="Abdellah Z."/>
            <person name="Hauser H."/>
            <person name="Jagels K."/>
            <person name="Maddison M."/>
            <person name="Moule S."/>
            <person name="Sanders M."/>
            <person name="Whitehead S."/>
            <person name="Quail M.A."/>
            <person name="Dougan G."/>
            <person name="Parkhill J."/>
            <person name="Prentice M.B."/>
        </authorList>
    </citation>
    <scope>NUCLEOTIDE SEQUENCE [LARGE SCALE GENOMIC DNA]</scope>
    <source>
        <strain>NCTC 13174 / 8081</strain>
    </source>
</reference>
<evidence type="ECO:0000255" key="1">
    <source>
        <dbReference type="HAMAP-Rule" id="MF_00430"/>
    </source>
</evidence>
<organism>
    <name type="scientific">Yersinia enterocolitica serotype O:8 / biotype 1B (strain NCTC 13174 / 8081)</name>
    <dbReference type="NCBI Taxonomy" id="393305"/>
    <lineage>
        <taxon>Bacteria</taxon>
        <taxon>Pseudomonadati</taxon>
        <taxon>Pseudomonadota</taxon>
        <taxon>Gammaproteobacteria</taxon>
        <taxon>Enterobacterales</taxon>
        <taxon>Yersiniaceae</taxon>
        <taxon>Yersinia</taxon>
    </lineage>
</organism>
<proteinExistence type="inferred from homology"/>
<sequence length="407" mass="45455">MEIILGVVMFTLIVLALTVMILFAKSKLVNTGDITIDINEDADKSFTAPAGDKLLNMLSSHGIFVSSACGGGGSCGQCRVTIKEGGGDILPTELSHISKREAKEGCRLACQVSVKQNLKIELPEEIFGVKKWECEVISNDNKATFIKELKLKIPDGEVVPFRAGGFIQIEAEPHTVKYADFDVPEEYRGDWDKFNLFRFESVVAEPTVRAYSMANYPEEHGIIMLNVRIATPPPSVPDAPPGIMSSYIWSLKPGDKVVISGPFGEFFAKDTDAEMVFIGGGAGMAPMRSHIFDQLKRLHSKRRISFWYGARSRREMFYEEDFDQLQAENDNFRWHVALSDPQPEDNWTGYTGFIHNVLLENYLKNHPAPEDCEFYMCGPPMMNAAVIKMLKDLGVEDENIMLDDFGG</sequence>
<keyword id="KW-0001">2Fe-2S</keyword>
<keyword id="KW-0997">Cell inner membrane</keyword>
<keyword id="KW-1003">Cell membrane</keyword>
<keyword id="KW-0274">FAD</keyword>
<keyword id="KW-0285">Flavoprotein</keyword>
<keyword id="KW-0406">Ion transport</keyword>
<keyword id="KW-0408">Iron</keyword>
<keyword id="KW-0411">Iron-sulfur</keyword>
<keyword id="KW-0472">Membrane</keyword>
<keyword id="KW-0479">Metal-binding</keyword>
<keyword id="KW-0520">NAD</keyword>
<keyword id="KW-0915">Sodium</keyword>
<keyword id="KW-0739">Sodium transport</keyword>
<keyword id="KW-1278">Translocase</keyword>
<keyword id="KW-0812">Transmembrane</keyword>
<keyword id="KW-1133">Transmembrane helix</keyword>
<keyword id="KW-0813">Transport</keyword>
<keyword id="KW-0830">Ubiquinone</keyword>
<accession>A1JNZ2</accession>